<feature type="chain" id="PRO_1000007426" description="Large ribosomal subunit protein uL29">
    <location>
        <begin position="1"/>
        <end position="68"/>
    </location>
</feature>
<gene>
    <name evidence="1" type="primary">rpmC</name>
    <name type="ordered locus">bsl5392</name>
</gene>
<evidence type="ECO:0000255" key="1">
    <source>
        <dbReference type="HAMAP-Rule" id="MF_00374"/>
    </source>
</evidence>
<evidence type="ECO:0000305" key="2"/>
<protein>
    <recommendedName>
        <fullName evidence="1">Large ribosomal subunit protein uL29</fullName>
    </recommendedName>
    <alternativeName>
        <fullName evidence="2">50S ribosomal protein L29</fullName>
    </alternativeName>
</protein>
<proteinExistence type="inferred from homology"/>
<comment type="similarity">
    <text evidence="1">Belongs to the universal ribosomal protein uL29 family.</text>
</comment>
<accession>Q89J92</accession>
<dbReference type="EMBL" id="BA000040">
    <property type="protein sequence ID" value="BAC50657.1"/>
    <property type="molecule type" value="Genomic_DNA"/>
</dbReference>
<dbReference type="RefSeq" id="NP_772032.1">
    <property type="nucleotide sequence ID" value="NC_004463.1"/>
</dbReference>
<dbReference type="RefSeq" id="WP_011088144.1">
    <property type="nucleotide sequence ID" value="NZ_CP011360.1"/>
</dbReference>
<dbReference type="SMR" id="Q89J92"/>
<dbReference type="FunCoup" id="Q89J92">
    <property type="interactions" value="532"/>
</dbReference>
<dbReference type="STRING" id="224911.AAV28_24370"/>
<dbReference type="EnsemblBacteria" id="BAC50657">
    <property type="protein sequence ID" value="BAC50657"/>
    <property type="gene ID" value="BAC50657"/>
</dbReference>
<dbReference type="GeneID" id="93215316"/>
<dbReference type="KEGG" id="bja:bsl5392"/>
<dbReference type="PATRIC" id="fig|224911.44.peg.5291"/>
<dbReference type="eggNOG" id="COG0255">
    <property type="taxonomic scope" value="Bacteria"/>
</dbReference>
<dbReference type="HOGENOM" id="CLU_158491_1_0_5"/>
<dbReference type="InParanoid" id="Q89J92"/>
<dbReference type="OrthoDB" id="9815192at2"/>
<dbReference type="PhylomeDB" id="Q89J92"/>
<dbReference type="PRO" id="PR:Q89J92"/>
<dbReference type="Proteomes" id="UP000002526">
    <property type="component" value="Chromosome"/>
</dbReference>
<dbReference type="GO" id="GO:0022625">
    <property type="term" value="C:cytosolic large ribosomal subunit"/>
    <property type="evidence" value="ECO:0000318"/>
    <property type="project" value="GO_Central"/>
</dbReference>
<dbReference type="GO" id="GO:0003735">
    <property type="term" value="F:structural constituent of ribosome"/>
    <property type="evidence" value="ECO:0007669"/>
    <property type="project" value="InterPro"/>
</dbReference>
<dbReference type="GO" id="GO:0006412">
    <property type="term" value="P:translation"/>
    <property type="evidence" value="ECO:0007669"/>
    <property type="project" value="UniProtKB-UniRule"/>
</dbReference>
<dbReference type="CDD" id="cd00427">
    <property type="entry name" value="Ribosomal_L29_HIP"/>
    <property type="match status" value="1"/>
</dbReference>
<dbReference type="FunFam" id="1.10.287.310:FF:000005">
    <property type="entry name" value="50S ribosomal protein L29"/>
    <property type="match status" value="1"/>
</dbReference>
<dbReference type="Gene3D" id="1.10.287.310">
    <property type="match status" value="1"/>
</dbReference>
<dbReference type="HAMAP" id="MF_00374">
    <property type="entry name" value="Ribosomal_uL29"/>
    <property type="match status" value="1"/>
</dbReference>
<dbReference type="InterPro" id="IPR050063">
    <property type="entry name" value="Ribosomal_protein_uL29"/>
</dbReference>
<dbReference type="InterPro" id="IPR001854">
    <property type="entry name" value="Ribosomal_uL29"/>
</dbReference>
<dbReference type="InterPro" id="IPR018254">
    <property type="entry name" value="Ribosomal_uL29_CS"/>
</dbReference>
<dbReference type="InterPro" id="IPR036049">
    <property type="entry name" value="Ribosomal_uL29_sf"/>
</dbReference>
<dbReference type="NCBIfam" id="TIGR00012">
    <property type="entry name" value="L29"/>
    <property type="match status" value="1"/>
</dbReference>
<dbReference type="PANTHER" id="PTHR10916">
    <property type="entry name" value="60S RIBOSOMAL PROTEIN L35/50S RIBOSOMAL PROTEIN L29"/>
    <property type="match status" value="1"/>
</dbReference>
<dbReference type="PANTHER" id="PTHR10916:SF0">
    <property type="entry name" value="LARGE RIBOSOMAL SUBUNIT PROTEIN UL29C"/>
    <property type="match status" value="1"/>
</dbReference>
<dbReference type="Pfam" id="PF00831">
    <property type="entry name" value="Ribosomal_L29"/>
    <property type="match status" value="1"/>
</dbReference>
<dbReference type="SUPFAM" id="SSF46561">
    <property type="entry name" value="Ribosomal protein L29 (L29p)"/>
    <property type="match status" value="1"/>
</dbReference>
<dbReference type="PROSITE" id="PS00579">
    <property type="entry name" value="RIBOSOMAL_L29"/>
    <property type="match status" value="1"/>
</dbReference>
<organism>
    <name type="scientific">Bradyrhizobium diazoefficiens (strain JCM 10833 / BCRC 13528 / IAM 13628 / NBRC 14792 / USDA 110)</name>
    <dbReference type="NCBI Taxonomy" id="224911"/>
    <lineage>
        <taxon>Bacteria</taxon>
        <taxon>Pseudomonadati</taxon>
        <taxon>Pseudomonadota</taxon>
        <taxon>Alphaproteobacteria</taxon>
        <taxon>Hyphomicrobiales</taxon>
        <taxon>Nitrobacteraceae</taxon>
        <taxon>Bradyrhizobium</taxon>
    </lineage>
</organism>
<reference key="1">
    <citation type="journal article" date="2002" name="DNA Res.">
        <title>Complete genomic sequence of nitrogen-fixing symbiotic bacterium Bradyrhizobium japonicum USDA110.</title>
        <authorList>
            <person name="Kaneko T."/>
            <person name="Nakamura Y."/>
            <person name="Sato S."/>
            <person name="Minamisawa K."/>
            <person name="Uchiumi T."/>
            <person name="Sasamoto S."/>
            <person name="Watanabe A."/>
            <person name="Idesawa K."/>
            <person name="Iriguchi M."/>
            <person name="Kawashima K."/>
            <person name="Kohara M."/>
            <person name="Matsumoto M."/>
            <person name="Shimpo S."/>
            <person name="Tsuruoka H."/>
            <person name="Wada T."/>
            <person name="Yamada M."/>
            <person name="Tabata S."/>
        </authorList>
    </citation>
    <scope>NUCLEOTIDE SEQUENCE [LARGE SCALE GENOMIC DNA]</scope>
    <source>
        <strain>JCM 10833 / BCRC 13528 / IAM 13628 / NBRC 14792 / USDA 110</strain>
    </source>
</reference>
<keyword id="KW-1185">Reference proteome</keyword>
<keyword id="KW-0687">Ribonucleoprotein</keyword>
<keyword id="KW-0689">Ribosomal protein</keyword>
<name>RL29_BRADU</name>
<sequence>MAQMKIEDIRAMSPDQQDDAILNLKKERFNLRFQRATGQLENTSRLREARRDIARIKTVAAQTRAKKK</sequence>